<comment type="function">
    <text>Activates B-regulated development.</text>
</comment>
<comment type="subcellular location">
    <subcellularLocation>
        <location evidence="3">Cell membrane</location>
        <topology evidence="3">Lipid-anchor</topology>
        <orientation evidence="3">Cytoplasmic side</orientation>
    </subcellularLocation>
</comment>
<name>BAP11_SCHCO</name>
<organism>
    <name type="scientific">Schizophyllum commune</name>
    <name type="common">Split gill fungus</name>
    <dbReference type="NCBI Taxonomy" id="5334"/>
    <lineage>
        <taxon>Eukaryota</taxon>
        <taxon>Fungi</taxon>
        <taxon>Dikarya</taxon>
        <taxon>Basidiomycota</taxon>
        <taxon>Agaricomycotina</taxon>
        <taxon>Agaricomycetes</taxon>
        <taxon>Agaricomycetidae</taxon>
        <taxon>Agaricales</taxon>
        <taxon>Schizophyllaceae</taxon>
        <taxon>Schizophyllum</taxon>
    </lineage>
</organism>
<keyword id="KW-1003">Cell membrane</keyword>
<keyword id="KW-0449">Lipoprotein</keyword>
<keyword id="KW-0472">Membrane</keyword>
<keyword id="KW-0488">Methylation</keyword>
<keyword id="KW-0588">Pheromone</keyword>
<keyword id="KW-0636">Prenylation</keyword>
<feature type="propeptide" id="PRO_0000020783" evidence="1">
    <location>
        <begin position="1"/>
        <end status="unknown"/>
    </location>
</feature>
<feature type="peptide" id="PRO_0000020784" description="Mating-type pheromone BAP1(1)">
    <location>
        <begin status="unknown"/>
        <end position="47"/>
    </location>
</feature>
<feature type="propeptide" id="PRO_0000020785" description="Removed in mature form" evidence="1">
    <location>
        <begin position="48"/>
        <end position="50"/>
    </location>
</feature>
<feature type="region of interest" description="Disordered" evidence="2">
    <location>
        <begin position="1"/>
        <end position="32"/>
    </location>
</feature>
<feature type="compositionally biased region" description="Low complexity" evidence="2">
    <location>
        <begin position="16"/>
        <end position="26"/>
    </location>
</feature>
<feature type="modified residue" description="Cysteine methyl ester" evidence="1">
    <location>
        <position position="47"/>
    </location>
</feature>
<feature type="lipid moiety-binding region" description="S-farnesyl cysteine" evidence="1">
    <location>
        <position position="47"/>
    </location>
</feature>
<reference key="1">
    <citation type="journal article" date="1995" name="EMBO J.">
        <title>The mating-type locus B alpha 1 of Schizophyllum commune contains a pheromone receptor gene and putative pheromone genes.</title>
        <authorList>
            <person name="Wendland J."/>
            <person name="Vaillancourt L.J."/>
            <person name="Hegner J."/>
            <person name="Lengeler K.B."/>
            <person name="Laddison K.J."/>
            <person name="Specht C.A."/>
            <person name="Raper C.A."/>
            <person name="Kothe E."/>
        </authorList>
    </citation>
    <scope>NUCLEOTIDE SEQUENCE [GENOMIC DNA]</scope>
    <source>
        <strain>ATCC 44201 / CBS 340.81 / UVM 4-40 / 4-40</strain>
    </source>
</reference>
<accession>P56504</accession>
<gene>
    <name type="primary">BAP1(1)</name>
</gene>
<evidence type="ECO:0000255" key="1"/>
<evidence type="ECO:0000256" key="2">
    <source>
        <dbReference type="SAM" id="MobiDB-lite"/>
    </source>
</evidence>
<evidence type="ECO:0000305" key="3"/>
<proteinExistence type="inferred from homology"/>
<protein>
    <recommendedName>
        <fullName>Mating-type pheromone BAP1(1)</fullName>
    </recommendedName>
</protein>
<dbReference type="EMBL" id="X77949">
    <property type="status" value="NOT_ANNOTATED_CDS"/>
    <property type="molecule type" value="Genomic_DNA"/>
</dbReference>
<dbReference type="GO" id="GO:0005886">
    <property type="term" value="C:plasma membrane"/>
    <property type="evidence" value="ECO:0007669"/>
    <property type="project" value="UniProtKB-SubCell"/>
</dbReference>
<dbReference type="GO" id="GO:0005186">
    <property type="term" value="F:pheromone activity"/>
    <property type="evidence" value="ECO:0007669"/>
    <property type="project" value="UniProtKB-KW"/>
</dbReference>
<sequence>MDGEGHDINIWGARMSPSPAAAPVSATRGAPWSGCEGCPSRAADRRCVCH</sequence>